<name>SPEE_AERPE</name>
<dbReference type="EC" id="2.5.1.16" evidence="1"/>
<dbReference type="EMBL" id="BA000002">
    <property type="protein sequence ID" value="BAA79745.2"/>
    <property type="molecule type" value="Genomic_DNA"/>
</dbReference>
<dbReference type="PIR" id="A72668">
    <property type="entry name" value="A72668"/>
</dbReference>
<dbReference type="RefSeq" id="WP_010865958.1">
    <property type="nucleotide sequence ID" value="NC_000854.2"/>
</dbReference>
<dbReference type="SMR" id="Q9YE02"/>
<dbReference type="STRING" id="272557.APE_0767.1"/>
<dbReference type="EnsemblBacteria" id="BAA79745">
    <property type="protein sequence ID" value="BAA79745"/>
    <property type="gene ID" value="APE_0767.1"/>
</dbReference>
<dbReference type="GeneID" id="1444881"/>
<dbReference type="KEGG" id="ape:APE_0767.1"/>
<dbReference type="PATRIC" id="fig|272557.25.peg.550"/>
<dbReference type="eggNOG" id="arCOG00050">
    <property type="taxonomic scope" value="Archaea"/>
</dbReference>
<dbReference type="UniPathway" id="UPA00248">
    <property type="reaction ID" value="UER00314"/>
</dbReference>
<dbReference type="Proteomes" id="UP000002518">
    <property type="component" value="Chromosome"/>
</dbReference>
<dbReference type="GO" id="GO:0005737">
    <property type="term" value="C:cytoplasm"/>
    <property type="evidence" value="ECO:0007669"/>
    <property type="project" value="UniProtKB-SubCell"/>
</dbReference>
<dbReference type="GO" id="GO:0004766">
    <property type="term" value="F:spermidine synthase activity"/>
    <property type="evidence" value="ECO:0007669"/>
    <property type="project" value="UniProtKB-UniRule"/>
</dbReference>
<dbReference type="GO" id="GO:0010487">
    <property type="term" value="F:thermospermine synthase activity"/>
    <property type="evidence" value="ECO:0007669"/>
    <property type="project" value="UniProtKB-ARBA"/>
</dbReference>
<dbReference type="GO" id="GO:0008295">
    <property type="term" value="P:spermidine biosynthetic process"/>
    <property type="evidence" value="ECO:0007669"/>
    <property type="project" value="UniProtKB-UniRule"/>
</dbReference>
<dbReference type="CDD" id="cd02440">
    <property type="entry name" value="AdoMet_MTases"/>
    <property type="match status" value="1"/>
</dbReference>
<dbReference type="FunFam" id="3.40.50.150:FF:000088">
    <property type="entry name" value="Polyamine aminopropyltransferase"/>
    <property type="match status" value="1"/>
</dbReference>
<dbReference type="Gene3D" id="2.30.140.10">
    <property type="entry name" value="Spermidine synthase, tetramerisation domain"/>
    <property type="match status" value="1"/>
</dbReference>
<dbReference type="Gene3D" id="3.40.50.150">
    <property type="entry name" value="Vaccinia Virus protein VP39"/>
    <property type="match status" value="1"/>
</dbReference>
<dbReference type="HAMAP" id="MF_00198">
    <property type="entry name" value="Spermidine_synth"/>
    <property type="match status" value="1"/>
</dbReference>
<dbReference type="InterPro" id="IPR030374">
    <property type="entry name" value="PABS"/>
</dbReference>
<dbReference type="InterPro" id="IPR030373">
    <property type="entry name" value="PABS_CS"/>
</dbReference>
<dbReference type="InterPro" id="IPR029063">
    <property type="entry name" value="SAM-dependent_MTases_sf"/>
</dbReference>
<dbReference type="InterPro" id="IPR001045">
    <property type="entry name" value="Spermi_synthase"/>
</dbReference>
<dbReference type="InterPro" id="IPR035246">
    <property type="entry name" value="Spermidine_synt_N"/>
</dbReference>
<dbReference type="InterPro" id="IPR037163">
    <property type="entry name" value="Spermidine_synt_N_sf"/>
</dbReference>
<dbReference type="NCBIfam" id="NF037959">
    <property type="entry name" value="MFS_SpdSyn"/>
    <property type="match status" value="1"/>
</dbReference>
<dbReference type="PANTHER" id="PTHR43317">
    <property type="entry name" value="THERMOSPERMINE SYNTHASE ACAULIS5"/>
    <property type="match status" value="1"/>
</dbReference>
<dbReference type="PANTHER" id="PTHR43317:SF1">
    <property type="entry name" value="THERMOSPERMINE SYNTHASE ACAULIS5"/>
    <property type="match status" value="1"/>
</dbReference>
<dbReference type="Pfam" id="PF17284">
    <property type="entry name" value="Spermine_synt_N"/>
    <property type="match status" value="1"/>
</dbReference>
<dbReference type="Pfam" id="PF01564">
    <property type="entry name" value="Spermine_synth"/>
    <property type="match status" value="1"/>
</dbReference>
<dbReference type="SUPFAM" id="SSF53335">
    <property type="entry name" value="S-adenosyl-L-methionine-dependent methyltransferases"/>
    <property type="match status" value="1"/>
</dbReference>
<dbReference type="PROSITE" id="PS01330">
    <property type="entry name" value="PABS_1"/>
    <property type="match status" value="1"/>
</dbReference>
<dbReference type="PROSITE" id="PS51006">
    <property type="entry name" value="PABS_2"/>
    <property type="match status" value="1"/>
</dbReference>
<gene>
    <name evidence="1" type="primary">speE</name>
    <name type="ordered locus">APE_0767.1</name>
</gene>
<feature type="chain" id="PRO_0000156524" description="Polyamine aminopropyltransferase">
    <location>
        <begin position="1"/>
        <end position="314"/>
    </location>
</feature>
<feature type="domain" description="PABS" evidence="1">
    <location>
        <begin position="13"/>
        <end position="249"/>
    </location>
</feature>
<feature type="active site" description="Proton acceptor" evidence="1">
    <location>
        <position position="168"/>
    </location>
</feature>
<feature type="binding site" evidence="1">
    <location>
        <position position="42"/>
    </location>
    <ligand>
        <name>S-methyl-5'-thioadenosine</name>
        <dbReference type="ChEBI" id="CHEBI:17509"/>
    </ligand>
</feature>
<feature type="binding site" evidence="1">
    <location>
        <position position="73"/>
    </location>
    <ligand>
        <name>spermidine</name>
        <dbReference type="ChEBI" id="CHEBI:57834"/>
    </ligand>
</feature>
<feature type="binding site" evidence="1">
    <location>
        <position position="97"/>
    </location>
    <ligand>
        <name>spermidine</name>
        <dbReference type="ChEBI" id="CHEBI:57834"/>
    </ligand>
</feature>
<feature type="binding site" evidence="1">
    <location>
        <position position="117"/>
    </location>
    <ligand>
        <name>S-methyl-5'-thioadenosine</name>
        <dbReference type="ChEBI" id="CHEBI:17509"/>
    </ligand>
</feature>
<feature type="binding site" evidence="1">
    <location>
        <begin position="149"/>
        <end position="150"/>
    </location>
    <ligand>
        <name>S-methyl-5'-thioadenosine</name>
        <dbReference type="ChEBI" id="CHEBI:17509"/>
    </ligand>
</feature>
<feature type="binding site" evidence="1">
    <location>
        <position position="177"/>
    </location>
    <ligand>
        <name>S-methyl-5'-thioadenosine</name>
        <dbReference type="ChEBI" id="CHEBI:17509"/>
    </ligand>
</feature>
<accession>Q9YE02</accession>
<comment type="function">
    <text evidence="1">Catalyzes the irreversible transfer of a propylamine group from the amino donor S-adenosylmethioninamine (decarboxy-AdoMet) to putrescine (1,4-diaminobutane) to yield spermidine.</text>
</comment>
<comment type="catalytic activity">
    <reaction evidence="1">
        <text>S-adenosyl 3-(methylsulfanyl)propylamine + putrescine = S-methyl-5'-thioadenosine + spermidine + H(+)</text>
        <dbReference type="Rhea" id="RHEA:12721"/>
        <dbReference type="ChEBI" id="CHEBI:15378"/>
        <dbReference type="ChEBI" id="CHEBI:17509"/>
        <dbReference type="ChEBI" id="CHEBI:57443"/>
        <dbReference type="ChEBI" id="CHEBI:57834"/>
        <dbReference type="ChEBI" id="CHEBI:326268"/>
        <dbReference type="EC" id="2.5.1.16"/>
    </reaction>
</comment>
<comment type="pathway">
    <text evidence="1">Amine and polyamine biosynthesis; spermidine biosynthesis; spermidine from putrescine: step 1/1.</text>
</comment>
<comment type="subunit">
    <text evidence="1">Homodimer or homotetramer.</text>
</comment>
<comment type="subcellular location">
    <subcellularLocation>
        <location evidence="1">Cytoplasm</location>
    </subcellularLocation>
</comment>
<comment type="similarity">
    <text evidence="1">Belongs to the spermidine/spermine synthase family.</text>
</comment>
<evidence type="ECO:0000255" key="1">
    <source>
        <dbReference type="HAMAP-Rule" id="MF_00198"/>
    </source>
</evidence>
<organism>
    <name type="scientific">Aeropyrum pernix (strain ATCC 700893 / DSM 11879 / JCM 9820 / NBRC 100138 / K1)</name>
    <dbReference type="NCBI Taxonomy" id="272557"/>
    <lineage>
        <taxon>Archaea</taxon>
        <taxon>Thermoproteota</taxon>
        <taxon>Thermoprotei</taxon>
        <taxon>Desulfurococcales</taxon>
        <taxon>Desulfurococcaceae</taxon>
        <taxon>Aeropyrum</taxon>
    </lineage>
</organism>
<sequence>MAGGSEKSVFLKWSWFLEWLTPDRATLKHIEDVIFQGRSRFQEIAVVRVSGEGKVLVLDGKTQSSESDEFMYHEALVHPAMILHGSPRKVLILGGGEGATLREVLKHRSVEKAVMVDIDETVVNVAREHLREWHRGAFDDPRAEVVIDDAWNYVASKAETGFDVVIADLVDPLEAGPATRLYSEEYYRMVKDVMNPGGVFVTQAVSISHLTEYHAIIRNTVARVFKHVESYGVYVPSFDSMWGFVVASDDKDPRILGDRGFFETRLSHQLQGAELRFLDYASMLHMLNIPKMYREAIAREKRYATLDNQVFLPA</sequence>
<protein>
    <recommendedName>
        <fullName evidence="1">Polyamine aminopropyltransferase</fullName>
    </recommendedName>
    <alternativeName>
        <fullName evidence="1">Putrescine aminopropyltransferase</fullName>
        <shortName evidence="1">PAPT</shortName>
    </alternativeName>
    <alternativeName>
        <fullName evidence="1">Spermidine synthase</fullName>
        <shortName evidence="1">SPDS</shortName>
        <shortName evidence="1">SPDSY</shortName>
        <ecNumber evidence="1">2.5.1.16</ecNumber>
    </alternativeName>
</protein>
<reference key="1">
    <citation type="journal article" date="1999" name="DNA Res.">
        <title>Complete genome sequence of an aerobic hyper-thermophilic crenarchaeon, Aeropyrum pernix K1.</title>
        <authorList>
            <person name="Kawarabayasi Y."/>
            <person name="Hino Y."/>
            <person name="Horikawa H."/>
            <person name="Yamazaki S."/>
            <person name="Haikawa Y."/>
            <person name="Jin-no K."/>
            <person name="Takahashi M."/>
            <person name="Sekine M."/>
            <person name="Baba S."/>
            <person name="Ankai A."/>
            <person name="Kosugi H."/>
            <person name="Hosoyama A."/>
            <person name="Fukui S."/>
            <person name="Nagai Y."/>
            <person name="Nishijima K."/>
            <person name="Nakazawa H."/>
            <person name="Takamiya M."/>
            <person name="Masuda S."/>
            <person name="Funahashi T."/>
            <person name="Tanaka T."/>
            <person name="Kudoh Y."/>
            <person name="Yamazaki J."/>
            <person name="Kushida N."/>
            <person name="Oguchi A."/>
            <person name="Aoki K."/>
            <person name="Kubota K."/>
            <person name="Nakamura Y."/>
            <person name="Nomura N."/>
            <person name="Sako Y."/>
            <person name="Kikuchi H."/>
        </authorList>
    </citation>
    <scope>NUCLEOTIDE SEQUENCE [LARGE SCALE GENOMIC DNA]</scope>
    <source>
        <strain>ATCC 700893 / DSM 11879 / JCM 9820 / NBRC 100138 / K1</strain>
    </source>
</reference>
<keyword id="KW-0963">Cytoplasm</keyword>
<keyword id="KW-0620">Polyamine biosynthesis</keyword>
<keyword id="KW-1185">Reference proteome</keyword>
<keyword id="KW-0745">Spermidine biosynthesis</keyword>
<keyword id="KW-0808">Transferase</keyword>
<proteinExistence type="inferred from homology"/>